<organism>
    <name type="scientific">Measles virus (strain IP-3-Ca)</name>
    <name type="common">MeV</name>
    <name type="synonym">Subacute sclerose panencephalitis virus</name>
    <dbReference type="NCBI Taxonomy" id="11237"/>
    <lineage>
        <taxon>Viruses</taxon>
        <taxon>Riboviria</taxon>
        <taxon>Orthornavirae</taxon>
        <taxon>Negarnaviricota</taxon>
        <taxon>Haploviricotina</taxon>
        <taxon>Monjiviricetes</taxon>
        <taxon>Mononegavirales</taxon>
        <taxon>Paramyxoviridae</taxon>
        <taxon>Orthoparamyxovirinae</taxon>
        <taxon>Morbillivirus</taxon>
        <taxon>Morbillivirus hominis</taxon>
        <taxon>Measles morbillivirus</taxon>
    </lineage>
</organism>
<evidence type="ECO:0000250" key="1"/>
<evidence type="ECO:0000250" key="2">
    <source>
        <dbReference type="UniProtKB" id="P0C774"/>
    </source>
</evidence>
<evidence type="ECO:0000250" key="3">
    <source>
        <dbReference type="UniProtKB" id="P11207"/>
    </source>
</evidence>
<evidence type="ECO:0000250" key="4">
    <source>
        <dbReference type="UniProtKB" id="Q77M19"/>
    </source>
</evidence>
<evidence type="ECO:0000250" key="5">
    <source>
        <dbReference type="UniProtKB" id="Q9EMA9"/>
    </source>
</evidence>
<evidence type="ECO:0000256" key="6">
    <source>
        <dbReference type="SAM" id="MobiDB-lite"/>
    </source>
</evidence>
<evidence type="ECO:0000305" key="7"/>
<protein>
    <recommendedName>
        <fullName>Non-structural protein V</fullName>
    </recommendedName>
</protein>
<organismHost>
    <name type="scientific">Homo sapiens</name>
    <name type="common">Human</name>
    <dbReference type="NCBI Taxonomy" id="9606"/>
</organismHost>
<keyword id="KW-1035">Host cytoplasm</keyword>
<keyword id="KW-0945">Host-virus interaction</keyword>
<keyword id="KW-1090">Inhibition of host innate immune response by virus</keyword>
<keyword id="KW-1114">Inhibition of host interferon signaling pathway by virus</keyword>
<keyword id="KW-1093">Inhibition of host IRF7 by virus</keyword>
<keyword id="KW-1089">Inhibition of host MDA5 by virus</keyword>
<keyword id="KW-1113">Inhibition of host RLR pathway by virus</keyword>
<keyword id="KW-1106">Inhibition of host STAT2 by virus</keyword>
<keyword id="KW-0922">Interferon antiviral system evasion</keyword>
<keyword id="KW-0479">Metal-binding</keyword>
<keyword id="KW-0691">RNA editing</keyword>
<keyword id="KW-0899">Viral immunoevasion</keyword>
<keyword id="KW-0862">Zinc</keyword>
<comment type="function">
    <text evidence="2 5">Plays an essential role in the inhibition of host immune response. Prevents the establishment of cellular antiviral state by blocking interferon-alpha/beta (IFN-alpha/beta) production and signaling pathway. Interacts with host IFIH1/MDA5 and DHX58/LGP2 to inhibit the transduction pathway involved in the activation of IFN-beta promoter, thus protecting the virus against cell antiviral state. Blocks the type I interferon signaling pathway by interacting with host TYK2 and thereby inhibiting downstream STAT1 and STAT2 phosphorylation (By similarity). Blocks the type I interferon signaling pathway by disrupting the RIG-I signaling pathway (By similarity). Moderately affects the type II interferon signaling. Prevents PP1alpha/gamma-mediated dephosphorylation of host IFIH1/MDA5 and thus blocks its activation (By similarity).</text>
</comment>
<comment type="subunit">
    <text evidence="2 4 5">Interacts with host IFIH1/MDA5 and DHX58/LGP2; these interactions are involved in the inhibition of the host type I interferon signaling pathway. Interacts with host TYK2; this interaction inhibits the type I interferon signaling pathway without affecting the type II pathway. Interacts with host IRF7; this interaction inhibits IRF7 translocation to the nucleus. Interacts with host CHUK (By similarity). Interacts with host RELA/p65; this interaction inhibits the nuclear translocation of NF-KappaB (By similarity). Interacts (via N-terminus) with host STAT1 and JAK1; these interactions inhibit STAT1 phosphorylation by Jak1 and thereby the type I interferon signaling pathway. Interacts (via C-terminus) with host STAT2; this interaction is involved in the inhibition of the host type I interferon signaling pathway. Forms a complex with host PPP1CA and PPP1CC; this interaction prevents dephosphorylation of host IFIH1/MDA5 and leads to the inhibition of the host type I interferon signaling pathway. Interacts with host IRF9; this interaction prevents the binding of IRF9 to STAT2 and thereby the type I interferon signaling pathway (By similarity). Interacts with host RIGI regulatory protein (via CARDs domain) and host TRIM25 (via SPRY domain); these interactions prevent TRIM25-mediated ubiquitination of RIG-I and disrupts downstream RIG-I signaling (By similarity).</text>
</comment>
<comment type="subcellular location">
    <subcellularLocation>
        <location evidence="1">Host cytoplasm</location>
    </subcellularLocation>
</comment>
<comment type="domain">
    <text evidence="2">The N-terminus interacts with host JAK1 and STAT1 (By similarity). The C-terminus interacts with host STAT2 (By similarity). The C-terminus also interacts with host PP1 (By similarity).</text>
</comment>
<comment type="RNA editing">
    <location>
        <position position="231" evidence="1"/>
    </location>
    <text evidence="1">Partially edited. RNA editing at this position consists of an insertion of one guanine nucleotide. The sequence displayed here is the V protein, derived from the edited RNA. The unedited RNA gives rise to the P protein (AC P26033) (By similarity).</text>
</comment>
<comment type="similarity">
    <text evidence="7">Belongs to the paramyxoviruses V protein family.</text>
</comment>
<proteinExistence type="inferred from homology"/>
<accession>P26036</accession>
<feature type="chain" id="PRO_0000142811" description="Non-structural protein V">
    <location>
        <begin position="1"/>
        <end position="299"/>
    </location>
</feature>
<feature type="region of interest" description="Disordered" evidence="6">
    <location>
        <begin position="40"/>
        <end position="98"/>
    </location>
</feature>
<feature type="region of interest" description="Interaction with host STAT1" evidence="2">
    <location>
        <begin position="110"/>
        <end position="120"/>
    </location>
</feature>
<feature type="region of interest" description="Disordered" evidence="6">
    <location>
        <begin position="134"/>
        <end position="174"/>
    </location>
</feature>
<feature type="region of interest" description="Disordered" evidence="6">
    <location>
        <begin position="204"/>
        <end position="230"/>
    </location>
</feature>
<feature type="compositionally biased region" description="Low complexity" evidence="6">
    <location>
        <begin position="134"/>
        <end position="145"/>
    </location>
</feature>
<feature type="compositionally biased region" description="Acidic residues" evidence="6">
    <location>
        <begin position="146"/>
        <end position="160"/>
    </location>
</feature>
<feature type="binding site" evidence="3">
    <location>
        <position position="232"/>
    </location>
    <ligand>
        <name>Zn(2+)</name>
        <dbReference type="ChEBI" id="CHEBI:29105"/>
        <label>1</label>
    </ligand>
</feature>
<feature type="binding site" evidence="3">
    <location>
        <position position="251"/>
    </location>
    <ligand>
        <name>Zn(2+)</name>
        <dbReference type="ChEBI" id="CHEBI:29105"/>
        <label>1</label>
    </ligand>
</feature>
<feature type="binding site" evidence="3">
    <location>
        <position position="255"/>
    </location>
    <ligand>
        <name>Zn(2+)</name>
        <dbReference type="ChEBI" id="CHEBI:29105"/>
        <label>2</label>
    </ligand>
</feature>
<feature type="binding site" evidence="3">
    <location>
        <position position="267"/>
    </location>
    <ligand>
        <name>Zn(2+)</name>
        <dbReference type="ChEBI" id="CHEBI:29105"/>
        <label>2</label>
    </ligand>
</feature>
<feature type="binding site" evidence="3">
    <location>
        <position position="269"/>
    </location>
    <ligand>
        <name>Zn(2+)</name>
        <dbReference type="ChEBI" id="CHEBI:29105"/>
        <label>2</label>
    </ligand>
</feature>
<feature type="binding site" evidence="3">
    <location>
        <position position="272"/>
    </location>
    <ligand>
        <name>Zn(2+)</name>
        <dbReference type="ChEBI" id="CHEBI:29105"/>
        <label>2</label>
    </ligand>
</feature>
<feature type="binding site" evidence="3">
    <location>
        <position position="276"/>
    </location>
    <ligand>
        <name>Zn(2+)</name>
        <dbReference type="ChEBI" id="CHEBI:29105"/>
        <label>1</label>
    </ligand>
</feature>
<feature type="binding site" evidence="3">
    <location>
        <position position="279"/>
    </location>
    <ligand>
        <name>Zn(2+)</name>
        <dbReference type="ChEBI" id="CHEBI:29105"/>
        <label>1</label>
    </ligand>
</feature>
<feature type="site" description="Interaction with host STAT2" evidence="2">
    <location>
        <position position="240"/>
    </location>
</feature>
<feature type="site" description="Interaction with host STAT2" evidence="2">
    <location>
        <position position="246"/>
    </location>
</feature>
<feature type="site" description="Interaction with host STAT2" evidence="2">
    <location>
        <position position="248"/>
    </location>
</feature>
<feature type="site" description="Interaction with host STAT2" evidence="2">
    <location>
        <position position="250"/>
    </location>
</feature>
<sequence>MAEEQARHVKNGLECIRALKAEPIGSLAIGEAMAAWSEISDNPGQEQATCKEEEAGASGLSKPCLSAIGSTEGGAPRIRGQGSGESDDDTETLGFPSRNLQASSTGLQCYYVYDHSGEAVKGIQDADSIMVQSGLDGDSTLSGGDNESENSDVDIGEPDTEGYAITDRGPAPISMGFRASDVETAEGGEIHELLRLQSRGNNFPKLGKTLNVPPPPDPGRASTSETPIKKGHRREISLIWDGDRVFIDRWCNPMCSKVTLGTIRARCTCGECPRVCEQCRTDTGVDTRIWYHNLPEIPE</sequence>
<name>V_MEASI</name>
<dbReference type="EMBL" id="X16566">
    <property type="status" value="NOT_ANNOTATED_CDS"/>
    <property type="molecule type" value="Genomic_RNA"/>
</dbReference>
<dbReference type="SMR" id="P26036"/>
<dbReference type="GO" id="GO:0030430">
    <property type="term" value="C:host cell cytoplasm"/>
    <property type="evidence" value="ECO:0007669"/>
    <property type="project" value="UniProtKB-SubCell"/>
</dbReference>
<dbReference type="GO" id="GO:0046872">
    <property type="term" value="F:metal ion binding"/>
    <property type="evidence" value="ECO:0007669"/>
    <property type="project" value="UniProtKB-KW"/>
</dbReference>
<dbReference type="GO" id="GO:0039557">
    <property type="term" value="P:symbiont-mediated suppression of host cytoplasmic pattern recognition receptor signaling pathway via inhibition of IRF7 activity"/>
    <property type="evidence" value="ECO:0007669"/>
    <property type="project" value="UniProtKB-KW"/>
</dbReference>
<dbReference type="GO" id="GO:0039554">
    <property type="term" value="P:symbiont-mediated suppression of host cytoplasmic pattern recognition receptor signaling pathway via inhibition of MDA-5 activity"/>
    <property type="evidence" value="ECO:0007669"/>
    <property type="project" value="UniProtKB-KW"/>
</dbReference>
<dbReference type="GO" id="GO:0039564">
    <property type="term" value="P:symbiont-mediated suppression of host JAK-STAT cascade via inhibition of STAT2 activity"/>
    <property type="evidence" value="ECO:0007669"/>
    <property type="project" value="UniProtKB-KW"/>
</dbReference>
<dbReference type="GO" id="GO:0039502">
    <property type="term" value="P:symbiont-mediated suppression of host type I interferon-mediated signaling pathway"/>
    <property type="evidence" value="ECO:0007669"/>
    <property type="project" value="UniProtKB-KW"/>
</dbReference>
<dbReference type="Gene3D" id="4.10.80.340">
    <property type="match status" value="1"/>
</dbReference>
<dbReference type="InterPro" id="IPR024279">
    <property type="entry name" value="Paramyx_V_Zn-bd"/>
</dbReference>
<dbReference type="InterPro" id="IPR028243">
    <property type="entry name" value="Paramyxo_P/V_N"/>
</dbReference>
<dbReference type="Pfam" id="PF13825">
    <property type="entry name" value="Paramyxo_P_V_N"/>
    <property type="match status" value="1"/>
</dbReference>
<dbReference type="Pfam" id="PF13008">
    <property type="entry name" value="zf-Paramyx-P"/>
    <property type="match status" value="1"/>
</dbReference>
<reference key="1">
    <citation type="journal article" date="1992" name="Virology">
        <title>Subacute sclerosing panencephalitis is typically characterized by alterations in the fusion protein cytoplasmic domain of the persisting measles virus.</title>
        <authorList>
            <person name="Schmid A."/>
            <person name="Spielhofer P."/>
            <person name="Cattaneo R."/>
            <person name="Baczko K."/>
            <person name="Ter Meulen V."/>
            <person name="Billeter M.A."/>
        </authorList>
    </citation>
    <scope>NUCLEOTIDE SEQUENCE [GENOMIC RNA]</scope>
</reference>
<gene>
    <name type="primary">P/V</name>
</gene>